<feature type="chain" id="PRO_0000316787" description="Pseudouridylate synthase PUS7L">
    <location>
        <begin position="1"/>
        <end position="643"/>
    </location>
</feature>
<feature type="domain" description="TRUD" evidence="3">
    <location>
        <begin position="370"/>
        <end position="597"/>
    </location>
</feature>
<feature type="active site" description="Nucleophile" evidence="1">
    <location>
        <position position="284"/>
    </location>
</feature>
<feature type="sequence conflict" description="In Ref. 2; AAI34852." evidence="4" ref="2">
    <original>F</original>
    <variation>L</variation>
    <location>
        <position position="169"/>
    </location>
</feature>
<feature type="sequence conflict" description="In Ref. 2; AAI34852." evidence="4" ref="2">
    <location>
        <position position="243"/>
    </location>
</feature>
<feature type="sequence conflict" description="In Ref. 2; AAI34852." evidence="4" ref="2">
    <original>E</original>
    <variation>Q</variation>
    <location>
        <position position="316"/>
    </location>
</feature>
<feature type="sequence conflict" description="In Ref. 2; AAI34852." evidence="4" ref="2">
    <original>V</original>
    <variation>A</variation>
    <location>
        <position position="435"/>
    </location>
</feature>
<feature type="sequence conflict" description="In Ref. 2; AAI34852." evidence="4" ref="2">
    <original>L</original>
    <variation>I</variation>
    <location>
        <position position="451"/>
    </location>
</feature>
<feature type="sequence conflict" description="In Ref. 2; AAI34852." evidence="4" ref="2">
    <original>T</original>
    <variation>A</variation>
    <location>
        <position position="530"/>
    </location>
</feature>
<feature type="sequence conflict" description="In Ref. 2; AAI34852." evidence="4" ref="2">
    <original>L</original>
    <variation>I</variation>
    <location>
        <position position="559"/>
    </location>
</feature>
<feature type="sequence conflict" description="In Ref. 2; AAI34852." evidence="4" ref="2">
    <original>T</original>
    <variation>R</variation>
    <location>
        <position position="607"/>
    </location>
</feature>
<protein>
    <recommendedName>
        <fullName evidence="4">Pseudouridylate synthase PUS7L</fullName>
        <ecNumber evidence="2">5.4.99.-</ecNumber>
    </recommendedName>
    <alternativeName>
        <fullName evidence="4">Pseudouridylate synthase 7 homolog-like protein</fullName>
    </alternativeName>
</protein>
<accession>Q1L8I0</accession>
<accession>A4QN40</accession>
<dbReference type="EC" id="5.4.99.-" evidence="2"/>
<dbReference type="EMBL" id="CR786571">
    <property type="protein sequence ID" value="CAK10756.1"/>
    <property type="molecule type" value="Genomic_DNA"/>
</dbReference>
<dbReference type="EMBL" id="BC134851">
    <property type="protein sequence ID" value="AAI34852.1"/>
    <property type="molecule type" value="mRNA"/>
</dbReference>
<dbReference type="RefSeq" id="NP_001038422.1">
    <property type="nucleotide sequence ID" value="NM_001044957.2"/>
</dbReference>
<dbReference type="SMR" id="Q1L8I0"/>
<dbReference type="FunCoup" id="Q1L8I0">
    <property type="interactions" value="325"/>
</dbReference>
<dbReference type="STRING" id="7955.ENSDARP00000115135"/>
<dbReference type="PaxDb" id="7955-ENSDARP00000092588"/>
<dbReference type="Ensembl" id="ENSDART00000143804">
    <property type="protein sequence ID" value="ENSDARP00000115135"/>
    <property type="gene ID" value="ENSDARG00000069780"/>
</dbReference>
<dbReference type="GeneID" id="561376"/>
<dbReference type="KEGG" id="dre:561376"/>
<dbReference type="AGR" id="ZFIN:ZDB-GENE-050419-188"/>
<dbReference type="CTD" id="83448"/>
<dbReference type="ZFIN" id="ZDB-GENE-050419-188">
    <property type="gene designation" value="pus7l"/>
</dbReference>
<dbReference type="eggNOG" id="KOG2339">
    <property type="taxonomic scope" value="Eukaryota"/>
</dbReference>
<dbReference type="InParanoid" id="Q1L8I0"/>
<dbReference type="OMA" id="FPNNKVH"/>
<dbReference type="OrthoDB" id="447290at2759"/>
<dbReference type="PhylomeDB" id="Q1L8I0"/>
<dbReference type="PRO" id="PR:Q1L8I0"/>
<dbReference type="Proteomes" id="UP000000437">
    <property type="component" value="Chromosome 4"/>
</dbReference>
<dbReference type="Bgee" id="ENSDARG00000069780">
    <property type="expression patterns" value="Expressed in tail and 20 other cell types or tissues"/>
</dbReference>
<dbReference type="ExpressionAtlas" id="Q1L8I0">
    <property type="expression patterns" value="baseline"/>
</dbReference>
<dbReference type="GO" id="GO:0005634">
    <property type="term" value="C:nucleus"/>
    <property type="evidence" value="ECO:0000318"/>
    <property type="project" value="GO_Central"/>
</dbReference>
<dbReference type="GO" id="GO:0009982">
    <property type="term" value="F:pseudouridine synthase activity"/>
    <property type="evidence" value="ECO:0000250"/>
    <property type="project" value="UniProtKB"/>
</dbReference>
<dbReference type="GO" id="GO:0003723">
    <property type="term" value="F:RNA binding"/>
    <property type="evidence" value="ECO:0007669"/>
    <property type="project" value="InterPro"/>
</dbReference>
<dbReference type="GO" id="GO:0006397">
    <property type="term" value="P:mRNA processing"/>
    <property type="evidence" value="ECO:0007669"/>
    <property type="project" value="UniProtKB-KW"/>
</dbReference>
<dbReference type="GO" id="GO:1990481">
    <property type="term" value="P:mRNA pseudouridine synthesis"/>
    <property type="evidence" value="ECO:0000250"/>
    <property type="project" value="UniProtKB"/>
</dbReference>
<dbReference type="GO" id="GO:0001522">
    <property type="term" value="P:pseudouridine synthesis"/>
    <property type="evidence" value="ECO:0000318"/>
    <property type="project" value="GO_Central"/>
</dbReference>
<dbReference type="CDD" id="cd02576">
    <property type="entry name" value="PseudoU_synth_ScPUS7"/>
    <property type="match status" value="1"/>
</dbReference>
<dbReference type="FunFam" id="3.30.2350.20:FF:000005">
    <property type="entry name" value="pseudouridylate synthase 7 homolog-like protein"/>
    <property type="match status" value="1"/>
</dbReference>
<dbReference type="Gene3D" id="3.30.2350.20">
    <property type="entry name" value="TruD, catalytic domain"/>
    <property type="match status" value="2"/>
</dbReference>
<dbReference type="InterPro" id="IPR020103">
    <property type="entry name" value="PsdUridine_synth_cat_dom_sf"/>
</dbReference>
<dbReference type="InterPro" id="IPR001656">
    <property type="entry name" value="PsdUridine_synth_TruD"/>
</dbReference>
<dbReference type="InterPro" id="IPR011760">
    <property type="entry name" value="PsdUridine_synth_TruD_insert"/>
</dbReference>
<dbReference type="InterPro" id="IPR056963">
    <property type="entry name" value="PUS7L_N"/>
</dbReference>
<dbReference type="InterPro" id="IPR056961">
    <property type="entry name" value="R3H_PUS7L"/>
</dbReference>
<dbReference type="InterPro" id="IPR042214">
    <property type="entry name" value="TruD_catalytic"/>
</dbReference>
<dbReference type="NCBIfam" id="TIGR00094">
    <property type="entry name" value="tRNA_TruD_broad"/>
    <property type="match status" value="1"/>
</dbReference>
<dbReference type="PANTHER" id="PTHR13326:SF21">
    <property type="entry name" value="PSEUDOURIDYLATE SYNTHASE PUS7L"/>
    <property type="match status" value="1"/>
</dbReference>
<dbReference type="PANTHER" id="PTHR13326">
    <property type="entry name" value="TRNA PSEUDOURIDINE SYNTHASE D"/>
    <property type="match status" value="1"/>
</dbReference>
<dbReference type="Pfam" id="PF23943">
    <property type="entry name" value="PUS7L_N"/>
    <property type="match status" value="1"/>
</dbReference>
<dbReference type="Pfam" id="PF25094">
    <property type="entry name" value="R3H_PUS7L"/>
    <property type="match status" value="1"/>
</dbReference>
<dbReference type="Pfam" id="PF01142">
    <property type="entry name" value="TruD"/>
    <property type="match status" value="1"/>
</dbReference>
<dbReference type="PIRSF" id="PIRSF037016">
    <property type="entry name" value="Pseudouridin_synth_euk_prd"/>
    <property type="match status" value="1"/>
</dbReference>
<dbReference type="SUPFAM" id="SSF55120">
    <property type="entry name" value="Pseudouridine synthase"/>
    <property type="match status" value="1"/>
</dbReference>
<dbReference type="PROSITE" id="PS50984">
    <property type="entry name" value="TRUD"/>
    <property type="match status" value="1"/>
</dbReference>
<sequence length="643" mass="73112">MERNTLSCFISDHEGFNGTIKNSPQDFVVIEIDTNGQFVNSVNTEEEERPCQTTKRIGKLKPSKPDDTDSLIQDCFDLNLILGLSVNRELEHFTNKLKVKPCSDDQEKVELSLGTFPDKHMRAVVHKAVRFNFPFLQTLTNQSEIRVREDPDFQELAGLASEGEAEDFFRFIDAKTPGSVFTFLPDDSKEHRTSVHHFVSRRFGKLVETKSFVDQQKTCITVRLRERGKQAKKRTMADCQMQEESLYTAFTLRKENLETLEAISYMAAVLGVLPSDFTYAGIKDKRAITYQAMVVKKISPERLLEKGSEFERRGMEISRVRPAFEALKLGRLQGNHFELVIRDLKHHGKHGLAELPKVIEEAVENVKNKGFVNYYGPQRFGSGSCVQADQVGLALLKENMEASVKLFFTPEDDDDLQNKAKRHFLHTGNAKESLVLMPAYKARERLMLRALHRYGSGQEGCTRGWLSLPHSMRVFYLHSYCSRVWNQAAKYRLQKLGFKPVQGDLVWAEPVKGLKDATEELSAPQIHVVTSDEEKNEVFSLDQVILPMPGNSVKYPENLLGQWYQDRLAQDGLESCRFRVTPLKLNVPGCYRPLLAKPQNITYSLQTSSSDESNTHCLSLNFDLEASCYATVCLGEIMKTNLS</sequence>
<organism>
    <name type="scientific">Danio rerio</name>
    <name type="common">Zebrafish</name>
    <name type="synonym">Brachydanio rerio</name>
    <dbReference type="NCBI Taxonomy" id="7955"/>
    <lineage>
        <taxon>Eukaryota</taxon>
        <taxon>Metazoa</taxon>
        <taxon>Chordata</taxon>
        <taxon>Craniata</taxon>
        <taxon>Vertebrata</taxon>
        <taxon>Euteleostomi</taxon>
        <taxon>Actinopterygii</taxon>
        <taxon>Neopterygii</taxon>
        <taxon>Teleostei</taxon>
        <taxon>Ostariophysi</taxon>
        <taxon>Cypriniformes</taxon>
        <taxon>Danionidae</taxon>
        <taxon>Danioninae</taxon>
        <taxon>Danio</taxon>
    </lineage>
</organism>
<gene>
    <name type="primary">pus7l</name>
    <name type="ORF">si:dkey-234l24.3</name>
</gene>
<proteinExistence type="evidence at transcript level"/>
<reference key="1">
    <citation type="journal article" date="2013" name="Nature">
        <title>The zebrafish reference genome sequence and its relationship to the human genome.</title>
        <authorList>
            <person name="Howe K."/>
            <person name="Clark M.D."/>
            <person name="Torroja C.F."/>
            <person name="Torrance J."/>
            <person name="Berthelot C."/>
            <person name="Muffato M."/>
            <person name="Collins J.E."/>
            <person name="Humphray S."/>
            <person name="McLaren K."/>
            <person name="Matthews L."/>
            <person name="McLaren S."/>
            <person name="Sealy I."/>
            <person name="Caccamo M."/>
            <person name="Churcher C."/>
            <person name="Scott C."/>
            <person name="Barrett J.C."/>
            <person name="Koch R."/>
            <person name="Rauch G.J."/>
            <person name="White S."/>
            <person name="Chow W."/>
            <person name="Kilian B."/>
            <person name="Quintais L.T."/>
            <person name="Guerra-Assuncao J.A."/>
            <person name="Zhou Y."/>
            <person name="Gu Y."/>
            <person name="Yen J."/>
            <person name="Vogel J.H."/>
            <person name="Eyre T."/>
            <person name="Redmond S."/>
            <person name="Banerjee R."/>
            <person name="Chi J."/>
            <person name="Fu B."/>
            <person name="Langley E."/>
            <person name="Maguire S.F."/>
            <person name="Laird G.K."/>
            <person name="Lloyd D."/>
            <person name="Kenyon E."/>
            <person name="Donaldson S."/>
            <person name="Sehra H."/>
            <person name="Almeida-King J."/>
            <person name="Loveland J."/>
            <person name="Trevanion S."/>
            <person name="Jones M."/>
            <person name="Quail M."/>
            <person name="Willey D."/>
            <person name="Hunt A."/>
            <person name="Burton J."/>
            <person name="Sims S."/>
            <person name="McLay K."/>
            <person name="Plumb B."/>
            <person name="Davis J."/>
            <person name="Clee C."/>
            <person name="Oliver K."/>
            <person name="Clark R."/>
            <person name="Riddle C."/>
            <person name="Elliot D."/>
            <person name="Threadgold G."/>
            <person name="Harden G."/>
            <person name="Ware D."/>
            <person name="Begum S."/>
            <person name="Mortimore B."/>
            <person name="Kerry G."/>
            <person name="Heath P."/>
            <person name="Phillimore B."/>
            <person name="Tracey A."/>
            <person name="Corby N."/>
            <person name="Dunn M."/>
            <person name="Johnson C."/>
            <person name="Wood J."/>
            <person name="Clark S."/>
            <person name="Pelan S."/>
            <person name="Griffiths G."/>
            <person name="Smith M."/>
            <person name="Glithero R."/>
            <person name="Howden P."/>
            <person name="Barker N."/>
            <person name="Lloyd C."/>
            <person name="Stevens C."/>
            <person name="Harley J."/>
            <person name="Holt K."/>
            <person name="Panagiotidis G."/>
            <person name="Lovell J."/>
            <person name="Beasley H."/>
            <person name="Henderson C."/>
            <person name="Gordon D."/>
            <person name="Auger K."/>
            <person name="Wright D."/>
            <person name="Collins J."/>
            <person name="Raisen C."/>
            <person name="Dyer L."/>
            <person name="Leung K."/>
            <person name="Robertson L."/>
            <person name="Ambridge K."/>
            <person name="Leongamornlert D."/>
            <person name="McGuire S."/>
            <person name="Gilderthorp R."/>
            <person name="Griffiths C."/>
            <person name="Manthravadi D."/>
            <person name="Nichol S."/>
            <person name="Barker G."/>
            <person name="Whitehead S."/>
            <person name="Kay M."/>
            <person name="Brown J."/>
            <person name="Murnane C."/>
            <person name="Gray E."/>
            <person name="Humphries M."/>
            <person name="Sycamore N."/>
            <person name="Barker D."/>
            <person name="Saunders D."/>
            <person name="Wallis J."/>
            <person name="Babbage A."/>
            <person name="Hammond S."/>
            <person name="Mashreghi-Mohammadi M."/>
            <person name="Barr L."/>
            <person name="Martin S."/>
            <person name="Wray P."/>
            <person name="Ellington A."/>
            <person name="Matthews N."/>
            <person name="Ellwood M."/>
            <person name="Woodmansey R."/>
            <person name="Clark G."/>
            <person name="Cooper J."/>
            <person name="Tromans A."/>
            <person name="Grafham D."/>
            <person name="Skuce C."/>
            <person name="Pandian R."/>
            <person name="Andrews R."/>
            <person name="Harrison E."/>
            <person name="Kimberley A."/>
            <person name="Garnett J."/>
            <person name="Fosker N."/>
            <person name="Hall R."/>
            <person name="Garner P."/>
            <person name="Kelly D."/>
            <person name="Bird C."/>
            <person name="Palmer S."/>
            <person name="Gehring I."/>
            <person name="Berger A."/>
            <person name="Dooley C.M."/>
            <person name="Ersan-Urun Z."/>
            <person name="Eser C."/>
            <person name="Geiger H."/>
            <person name="Geisler M."/>
            <person name="Karotki L."/>
            <person name="Kirn A."/>
            <person name="Konantz J."/>
            <person name="Konantz M."/>
            <person name="Oberlander M."/>
            <person name="Rudolph-Geiger S."/>
            <person name="Teucke M."/>
            <person name="Lanz C."/>
            <person name="Raddatz G."/>
            <person name="Osoegawa K."/>
            <person name="Zhu B."/>
            <person name="Rapp A."/>
            <person name="Widaa S."/>
            <person name="Langford C."/>
            <person name="Yang F."/>
            <person name="Schuster S.C."/>
            <person name="Carter N.P."/>
            <person name="Harrow J."/>
            <person name="Ning Z."/>
            <person name="Herrero J."/>
            <person name="Searle S.M."/>
            <person name="Enright A."/>
            <person name="Geisler R."/>
            <person name="Plasterk R.H."/>
            <person name="Lee C."/>
            <person name="Westerfield M."/>
            <person name="de Jong P.J."/>
            <person name="Zon L.I."/>
            <person name="Postlethwait J.H."/>
            <person name="Nusslein-Volhard C."/>
            <person name="Hubbard T.J."/>
            <person name="Roest Crollius H."/>
            <person name="Rogers J."/>
            <person name="Stemple D.L."/>
        </authorList>
    </citation>
    <scope>NUCLEOTIDE SEQUENCE [LARGE SCALE GENOMIC DNA]</scope>
    <source>
        <strain>Tuebingen</strain>
    </source>
</reference>
<reference key="2">
    <citation type="submission" date="2007-03" db="EMBL/GenBank/DDBJ databases">
        <authorList>
            <consortium name="NIH - Zebrafish Gene Collection (ZGC) project"/>
        </authorList>
    </citation>
    <scope>NUCLEOTIDE SEQUENCE [LARGE SCALE MRNA]</scope>
    <source>
        <strain>WIK</strain>
        <tissue>Ovary</tissue>
    </source>
</reference>
<name>PUS7L_DANRE</name>
<keyword id="KW-0413">Isomerase</keyword>
<keyword id="KW-0507">mRNA processing</keyword>
<keyword id="KW-1185">Reference proteome</keyword>
<comment type="function">
    <text evidence="2">Pseudouridine synthase that catalyzes pseudouridylation of mRNAs.</text>
</comment>
<comment type="catalytic activity">
    <reaction evidence="2">
        <text>a uridine in mRNA = a pseudouridine in mRNA</text>
        <dbReference type="Rhea" id="RHEA:56644"/>
        <dbReference type="Rhea" id="RHEA-COMP:14658"/>
        <dbReference type="Rhea" id="RHEA-COMP:14659"/>
        <dbReference type="ChEBI" id="CHEBI:65314"/>
        <dbReference type="ChEBI" id="CHEBI:65315"/>
    </reaction>
</comment>
<comment type="similarity">
    <text evidence="4">Belongs to the pseudouridine synthase TruD family.</text>
</comment>
<evidence type="ECO:0000250" key="1">
    <source>
        <dbReference type="UniProtKB" id="Q57261"/>
    </source>
</evidence>
<evidence type="ECO:0000250" key="2">
    <source>
        <dbReference type="UniProtKB" id="Q9H0K6"/>
    </source>
</evidence>
<evidence type="ECO:0000255" key="3">
    <source>
        <dbReference type="PROSITE-ProRule" id="PRU00342"/>
    </source>
</evidence>
<evidence type="ECO:0000305" key="4"/>